<reference key="1">
    <citation type="journal article" date="1997" name="Nature">
        <title>The complete genome sequence of the Gram-positive bacterium Bacillus subtilis.</title>
        <authorList>
            <person name="Kunst F."/>
            <person name="Ogasawara N."/>
            <person name="Moszer I."/>
            <person name="Albertini A.M."/>
            <person name="Alloni G."/>
            <person name="Azevedo V."/>
            <person name="Bertero M.G."/>
            <person name="Bessieres P."/>
            <person name="Bolotin A."/>
            <person name="Borchert S."/>
            <person name="Borriss R."/>
            <person name="Boursier L."/>
            <person name="Brans A."/>
            <person name="Braun M."/>
            <person name="Brignell S.C."/>
            <person name="Bron S."/>
            <person name="Brouillet S."/>
            <person name="Bruschi C.V."/>
            <person name="Caldwell B."/>
            <person name="Capuano V."/>
            <person name="Carter N.M."/>
            <person name="Choi S.-K."/>
            <person name="Codani J.-J."/>
            <person name="Connerton I.F."/>
            <person name="Cummings N.J."/>
            <person name="Daniel R.A."/>
            <person name="Denizot F."/>
            <person name="Devine K.M."/>
            <person name="Duesterhoeft A."/>
            <person name="Ehrlich S.D."/>
            <person name="Emmerson P.T."/>
            <person name="Entian K.-D."/>
            <person name="Errington J."/>
            <person name="Fabret C."/>
            <person name="Ferrari E."/>
            <person name="Foulger D."/>
            <person name="Fritz C."/>
            <person name="Fujita M."/>
            <person name="Fujita Y."/>
            <person name="Fuma S."/>
            <person name="Galizzi A."/>
            <person name="Galleron N."/>
            <person name="Ghim S.-Y."/>
            <person name="Glaser P."/>
            <person name="Goffeau A."/>
            <person name="Golightly E.J."/>
            <person name="Grandi G."/>
            <person name="Guiseppi G."/>
            <person name="Guy B.J."/>
            <person name="Haga K."/>
            <person name="Haiech J."/>
            <person name="Harwood C.R."/>
            <person name="Henaut A."/>
            <person name="Hilbert H."/>
            <person name="Holsappel S."/>
            <person name="Hosono S."/>
            <person name="Hullo M.-F."/>
            <person name="Itaya M."/>
            <person name="Jones L.-M."/>
            <person name="Joris B."/>
            <person name="Karamata D."/>
            <person name="Kasahara Y."/>
            <person name="Klaerr-Blanchard M."/>
            <person name="Klein C."/>
            <person name="Kobayashi Y."/>
            <person name="Koetter P."/>
            <person name="Koningstein G."/>
            <person name="Krogh S."/>
            <person name="Kumano M."/>
            <person name="Kurita K."/>
            <person name="Lapidus A."/>
            <person name="Lardinois S."/>
            <person name="Lauber J."/>
            <person name="Lazarevic V."/>
            <person name="Lee S.-M."/>
            <person name="Levine A."/>
            <person name="Liu H."/>
            <person name="Masuda S."/>
            <person name="Mauel C."/>
            <person name="Medigue C."/>
            <person name="Medina N."/>
            <person name="Mellado R.P."/>
            <person name="Mizuno M."/>
            <person name="Moestl D."/>
            <person name="Nakai S."/>
            <person name="Noback M."/>
            <person name="Noone D."/>
            <person name="O'Reilly M."/>
            <person name="Ogawa K."/>
            <person name="Ogiwara A."/>
            <person name="Oudega B."/>
            <person name="Park S.-H."/>
            <person name="Parro V."/>
            <person name="Pohl T.M."/>
            <person name="Portetelle D."/>
            <person name="Porwollik S."/>
            <person name="Prescott A.M."/>
            <person name="Presecan E."/>
            <person name="Pujic P."/>
            <person name="Purnelle B."/>
            <person name="Rapoport G."/>
            <person name="Rey M."/>
            <person name="Reynolds S."/>
            <person name="Rieger M."/>
            <person name="Rivolta C."/>
            <person name="Rocha E."/>
            <person name="Roche B."/>
            <person name="Rose M."/>
            <person name="Sadaie Y."/>
            <person name="Sato T."/>
            <person name="Scanlan E."/>
            <person name="Schleich S."/>
            <person name="Schroeter R."/>
            <person name="Scoffone F."/>
            <person name="Sekiguchi J."/>
            <person name="Sekowska A."/>
            <person name="Seror S.J."/>
            <person name="Serror P."/>
            <person name="Shin B.-S."/>
            <person name="Soldo B."/>
            <person name="Sorokin A."/>
            <person name="Tacconi E."/>
            <person name="Takagi T."/>
            <person name="Takahashi H."/>
            <person name="Takemaru K."/>
            <person name="Takeuchi M."/>
            <person name="Tamakoshi A."/>
            <person name="Tanaka T."/>
            <person name="Terpstra P."/>
            <person name="Tognoni A."/>
            <person name="Tosato V."/>
            <person name="Uchiyama S."/>
            <person name="Vandenbol M."/>
            <person name="Vannier F."/>
            <person name="Vassarotti A."/>
            <person name="Viari A."/>
            <person name="Wambutt R."/>
            <person name="Wedler E."/>
            <person name="Wedler H."/>
            <person name="Weitzenegger T."/>
            <person name="Winters P."/>
            <person name="Wipat A."/>
            <person name="Yamamoto H."/>
            <person name="Yamane K."/>
            <person name="Yasumoto K."/>
            <person name="Yata K."/>
            <person name="Yoshida K."/>
            <person name="Yoshikawa H.-F."/>
            <person name="Zumstein E."/>
            <person name="Yoshikawa H."/>
            <person name="Danchin A."/>
        </authorList>
    </citation>
    <scope>NUCLEOTIDE SEQUENCE [LARGE SCALE GENOMIC DNA]</scope>
    <source>
        <strain>168</strain>
    </source>
</reference>
<proteinExistence type="inferred from homology"/>
<evidence type="ECO:0000255" key="1">
    <source>
        <dbReference type="PROSITE-ProRule" id="PRU01246"/>
    </source>
</evidence>
<evidence type="ECO:0000305" key="2"/>
<keyword id="KW-0229">DNA integration</keyword>
<keyword id="KW-0233">DNA recombination</keyword>
<keyword id="KW-0238">DNA-binding</keyword>
<keyword id="KW-1185">Reference proteome</keyword>
<keyword id="KW-1179">Viral genome integration</keyword>
<keyword id="KW-1160">Virus entry into host cell</keyword>
<dbReference type="EMBL" id="AL009126">
    <property type="protein sequence ID" value="CAB13722.2"/>
    <property type="molecule type" value="Genomic_DNA"/>
</dbReference>
<dbReference type="RefSeq" id="NP_389721.2">
    <property type="nucleotide sequence ID" value="NC_000964.3"/>
</dbReference>
<dbReference type="RefSeq" id="WP_003231473.1">
    <property type="nucleotide sequence ID" value="NZ_OZ025638.1"/>
</dbReference>
<dbReference type="SMR" id="O35009"/>
<dbReference type="FunCoup" id="O35009">
    <property type="interactions" value="13"/>
</dbReference>
<dbReference type="STRING" id="224308.BSU18390"/>
<dbReference type="PaxDb" id="224308-BSU18390"/>
<dbReference type="EnsemblBacteria" id="CAB13722">
    <property type="protein sequence ID" value="CAB13722"/>
    <property type="gene ID" value="BSU_18390"/>
</dbReference>
<dbReference type="GeneID" id="939595"/>
<dbReference type="KEGG" id="bsu:BSU18390"/>
<dbReference type="PATRIC" id="fig|224308.179.peg.2006"/>
<dbReference type="eggNOG" id="COG0582">
    <property type="taxonomic scope" value="Bacteria"/>
</dbReference>
<dbReference type="InParanoid" id="O35009"/>
<dbReference type="OrthoDB" id="9788852at2"/>
<dbReference type="PhylomeDB" id="O35009"/>
<dbReference type="BioCyc" id="BSUB:BSU18390-MONOMER"/>
<dbReference type="Proteomes" id="UP000001570">
    <property type="component" value="Chromosome"/>
</dbReference>
<dbReference type="GO" id="GO:0003677">
    <property type="term" value="F:DNA binding"/>
    <property type="evidence" value="ECO:0007669"/>
    <property type="project" value="UniProtKB-KW"/>
</dbReference>
<dbReference type="GO" id="GO:0009009">
    <property type="term" value="F:site-specific recombinase activity"/>
    <property type="evidence" value="ECO:0000318"/>
    <property type="project" value="GO_Central"/>
</dbReference>
<dbReference type="GO" id="GO:0007059">
    <property type="term" value="P:chromosome segregation"/>
    <property type="evidence" value="ECO:0000318"/>
    <property type="project" value="GO_Central"/>
</dbReference>
<dbReference type="GO" id="GO:0006310">
    <property type="term" value="P:DNA recombination"/>
    <property type="evidence" value="ECO:0000318"/>
    <property type="project" value="GO_Central"/>
</dbReference>
<dbReference type="GO" id="GO:0075713">
    <property type="term" value="P:establishment of integrated proviral latency"/>
    <property type="evidence" value="ECO:0007669"/>
    <property type="project" value="UniProtKB-KW"/>
</dbReference>
<dbReference type="GO" id="GO:0046718">
    <property type="term" value="P:symbiont entry into host cell"/>
    <property type="evidence" value="ECO:0007669"/>
    <property type="project" value="UniProtKB-KW"/>
</dbReference>
<dbReference type="GO" id="GO:0044826">
    <property type="term" value="P:viral genome integration into host DNA"/>
    <property type="evidence" value="ECO:0007669"/>
    <property type="project" value="UniProtKB-KW"/>
</dbReference>
<dbReference type="CDD" id="cd01192">
    <property type="entry name" value="INT_C_like_3"/>
    <property type="match status" value="1"/>
</dbReference>
<dbReference type="Gene3D" id="1.10.443.10">
    <property type="entry name" value="Intergrase catalytic core"/>
    <property type="match status" value="1"/>
</dbReference>
<dbReference type="InterPro" id="IPR011010">
    <property type="entry name" value="DNA_brk_join_enz"/>
</dbReference>
<dbReference type="InterPro" id="IPR013762">
    <property type="entry name" value="Integrase-like_cat_sf"/>
</dbReference>
<dbReference type="InterPro" id="IPR002104">
    <property type="entry name" value="Integrase_catalytic"/>
</dbReference>
<dbReference type="InterPro" id="IPR050090">
    <property type="entry name" value="Tyrosine_recombinase_XerCD"/>
</dbReference>
<dbReference type="PANTHER" id="PTHR30349:SF82">
    <property type="entry name" value="INTEGRASE_RECOMBINASE YOEC-RELATED"/>
    <property type="match status" value="1"/>
</dbReference>
<dbReference type="PANTHER" id="PTHR30349">
    <property type="entry name" value="PHAGE INTEGRASE-RELATED"/>
    <property type="match status" value="1"/>
</dbReference>
<dbReference type="Pfam" id="PF00589">
    <property type="entry name" value="Phage_integrase"/>
    <property type="match status" value="1"/>
</dbReference>
<dbReference type="SUPFAM" id="SSF56349">
    <property type="entry name" value="DNA breaking-rejoining enzymes"/>
    <property type="match status" value="1"/>
</dbReference>
<dbReference type="PROSITE" id="PS51898">
    <property type="entry name" value="TYR_RECOMBINASE"/>
    <property type="match status" value="1"/>
</dbReference>
<comment type="similarity">
    <text evidence="2">Belongs to the 'phage' integrase family.</text>
</comment>
<accession>O35009</accession>
<feature type="chain" id="PRO_0000384389" description="Probable integrase/recombinase YoeC">
    <location>
        <begin position="1"/>
        <end position="181"/>
    </location>
</feature>
<feature type="domain" description="Tyr recombinase" evidence="1">
    <location>
        <begin position="3"/>
        <end position="176"/>
    </location>
</feature>
<feature type="active site" evidence="1">
    <location>
        <position position="40"/>
    </location>
</feature>
<feature type="active site" evidence="1">
    <location>
        <position position="64"/>
    </location>
</feature>
<feature type="active site" evidence="1">
    <location>
        <position position="128"/>
    </location>
</feature>
<feature type="active site" evidence="1">
    <location>
        <position position="131"/>
    </location>
</feature>
<feature type="active site" evidence="1">
    <location>
        <position position="154"/>
    </location>
</feature>
<feature type="active site" description="O-(3'-phospho-DNA)-tyrosine intermediate" evidence="1">
    <location>
        <position position="163"/>
    </location>
</feature>
<name>YOEC_BACSU</name>
<protein>
    <recommendedName>
        <fullName>Probable integrase/recombinase YoeC</fullName>
    </recommendedName>
</protein>
<gene>
    <name type="primary">yoeC</name>
    <name type="ordered locus">BSU18390</name>
</gene>
<sequence>MHIVQPIRSLEKIQEVKQYLLNKNKRDYFLFIFGINSALRISDILPLQVKDVQNKDHLWATESKTKKKRKILILESLKQEIYEYTKDMKENEYLFKSVRTRKPISRIQAYRILREAAAACGLEEIGTHTLRKTFGYHFYQRTKDIAELQRILNHSSPSITMRYIGIDEDTTRAAYKVFGGL</sequence>
<organism>
    <name type="scientific">Bacillus subtilis (strain 168)</name>
    <dbReference type="NCBI Taxonomy" id="224308"/>
    <lineage>
        <taxon>Bacteria</taxon>
        <taxon>Bacillati</taxon>
        <taxon>Bacillota</taxon>
        <taxon>Bacilli</taxon>
        <taxon>Bacillales</taxon>
        <taxon>Bacillaceae</taxon>
        <taxon>Bacillus</taxon>
    </lineage>
</organism>